<feature type="chain" id="PRO_0000132576" description="Small ribosomal subunit protein uS4c">
    <location>
        <begin position="1"/>
        <end position="207"/>
    </location>
</feature>
<feature type="domain" description="S4 RNA-binding">
    <location>
        <begin position="92"/>
        <end position="155"/>
    </location>
</feature>
<evidence type="ECO:0000250" key="1"/>
<evidence type="ECO:0000305" key="2"/>
<proteinExistence type="inferred from homology"/>
<comment type="function">
    <text evidence="1">One of the primary rRNA binding proteins, it binds directly to 16S rRNA where it nucleates assembly of the body of the 30S subunit.</text>
</comment>
<comment type="function">
    <text evidence="1">With S5 and S12 plays an important role in translational accuracy.</text>
</comment>
<comment type="subunit">
    <text evidence="1">Part of the 30S ribosomal subunit. Contacts protein S5. The interaction surface between S4 and S5 is involved in control of translational fidelity (By similarity).</text>
</comment>
<comment type="subcellular location">
    <subcellularLocation>
        <location>Plastid</location>
        <location>Chloroplast</location>
    </subcellularLocation>
</comment>
<comment type="similarity">
    <text evidence="2">Belongs to the universal ribosomal protein uS4 family.</text>
</comment>
<reference key="1">
    <citation type="journal article" date="2004" name="Syst. Bot.">
        <title>Phylogeny of horsetails (Equisetum) based on the chloroplast rps4 gene and adjacent noncoding sequences.</title>
        <authorList>
            <person name="Guillon J.-M."/>
        </authorList>
        <dbReference type="AGRICOLA" id="IND43653535"/>
    </citation>
    <scope>NUCLEOTIDE SEQUENCE [GENOMIC DNA]</scope>
</reference>
<keyword id="KW-0150">Chloroplast</keyword>
<keyword id="KW-0934">Plastid</keyword>
<keyword id="KW-0687">Ribonucleoprotein</keyword>
<keyword id="KW-0689">Ribosomal protein</keyword>
<keyword id="KW-0694">RNA-binding</keyword>
<keyword id="KW-0699">rRNA-binding</keyword>
<geneLocation type="chloroplast"/>
<name>RR4_EQUGI</name>
<protein>
    <recommendedName>
        <fullName evidence="2">Small ribosomal subunit protein uS4c</fullName>
    </recommendedName>
    <alternativeName>
        <fullName>30S ribosomal protein S4, chloroplastic</fullName>
    </alternativeName>
</protein>
<organism>
    <name type="scientific">Equisetum giganteum</name>
    <name type="common">Giant horsetail</name>
    <dbReference type="NCBI Taxonomy" id="3259"/>
    <lineage>
        <taxon>Eukaryota</taxon>
        <taxon>Viridiplantae</taxon>
        <taxon>Streptophyta</taxon>
        <taxon>Embryophyta</taxon>
        <taxon>Tracheophyta</taxon>
        <taxon>Polypodiopsida</taxon>
        <taxon>Equisetidae</taxon>
        <taxon>Equisetales</taxon>
        <taxon>Equisetaceae</taxon>
        <taxon>Equisetum</taxon>
    </lineage>
</organism>
<dbReference type="EMBL" id="AJ583681">
    <property type="protein sequence ID" value="CAE47535.1"/>
    <property type="molecule type" value="Genomic_DNA"/>
</dbReference>
<dbReference type="SMR" id="Q6H9L2"/>
<dbReference type="GO" id="GO:0009507">
    <property type="term" value="C:chloroplast"/>
    <property type="evidence" value="ECO:0007669"/>
    <property type="project" value="UniProtKB-SubCell"/>
</dbReference>
<dbReference type="GO" id="GO:0015935">
    <property type="term" value="C:small ribosomal subunit"/>
    <property type="evidence" value="ECO:0007669"/>
    <property type="project" value="InterPro"/>
</dbReference>
<dbReference type="GO" id="GO:0019843">
    <property type="term" value="F:rRNA binding"/>
    <property type="evidence" value="ECO:0007669"/>
    <property type="project" value="UniProtKB-UniRule"/>
</dbReference>
<dbReference type="GO" id="GO:0003735">
    <property type="term" value="F:structural constituent of ribosome"/>
    <property type="evidence" value="ECO:0007669"/>
    <property type="project" value="InterPro"/>
</dbReference>
<dbReference type="GO" id="GO:0042274">
    <property type="term" value="P:ribosomal small subunit biogenesis"/>
    <property type="evidence" value="ECO:0007669"/>
    <property type="project" value="TreeGrafter"/>
</dbReference>
<dbReference type="GO" id="GO:0006412">
    <property type="term" value="P:translation"/>
    <property type="evidence" value="ECO:0007669"/>
    <property type="project" value="UniProtKB-UniRule"/>
</dbReference>
<dbReference type="CDD" id="cd00165">
    <property type="entry name" value="S4"/>
    <property type="match status" value="1"/>
</dbReference>
<dbReference type="FunFam" id="3.10.290.10:FF:000001">
    <property type="entry name" value="30S ribosomal protein S4"/>
    <property type="match status" value="1"/>
</dbReference>
<dbReference type="FunFam" id="1.10.1050.10:FF:000002">
    <property type="entry name" value="30S ribosomal protein S4, chloroplastic"/>
    <property type="match status" value="1"/>
</dbReference>
<dbReference type="Gene3D" id="1.10.1050.10">
    <property type="entry name" value="Ribosomal Protein S4 Delta 41, Chain A, domain 1"/>
    <property type="match status" value="1"/>
</dbReference>
<dbReference type="Gene3D" id="3.10.290.10">
    <property type="entry name" value="RNA-binding S4 domain"/>
    <property type="match status" value="1"/>
</dbReference>
<dbReference type="HAMAP" id="MF_01306_B">
    <property type="entry name" value="Ribosomal_uS4_B"/>
    <property type="match status" value="1"/>
</dbReference>
<dbReference type="InterPro" id="IPR022801">
    <property type="entry name" value="Ribosomal_uS4"/>
</dbReference>
<dbReference type="InterPro" id="IPR005709">
    <property type="entry name" value="Ribosomal_uS4_bac-type"/>
</dbReference>
<dbReference type="InterPro" id="IPR018079">
    <property type="entry name" value="Ribosomal_uS4_CS"/>
</dbReference>
<dbReference type="InterPro" id="IPR001912">
    <property type="entry name" value="Ribosomal_uS4_N"/>
</dbReference>
<dbReference type="InterPro" id="IPR002942">
    <property type="entry name" value="S4_RNA-bd"/>
</dbReference>
<dbReference type="InterPro" id="IPR036986">
    <property type="entry name" value="S4_RNA-bd_sf"/>
</dbReference>
<dbReference type="NCBIfam" id="NF003717">
    <property type="entry name" value="PRK05327.1"/>
    <property type="match status" value="1"/>
</dbReference>
<dbReference type="NCBIfam" id="TIGR01017">
    <property type="entry name" value="rpsD_bact"/>
    <property type="match status" value="1"/>
</dbReference>
<dbReference type="PANTHER" id="PTHR11831">
    <property type="entry name" value="30S 40S RIBOSOMAL PROTEIN"/>
    <property type="match status" value="1"/>
</dbReference>
<dbReference type="PANTHER" id="PTHR11831:SF4">
    <property type="entry name" value="SMALL RIBOSOMAL SUBUNIT PROTEIN US4M"/>
    <property type="match status" value="1"/>
</dbReference>
<dbReference type="Pfam" id="PF00163">
    <property type="entry name" value="Ribosomal_S4"/>
    <property type="match status" value="1"/>
</dbReference>
<dbReference type="Pfam" id="PF01479">
    <property type="entry name" value="S4"/>
    <property type="match status" value="1"/>
</dbReference>
<dbReference type="SMART" id="SM01390">
    <property type="entry name" value="Ribosomal_S4"/>
    <property type="match status" value="1"/>
</dbReference>
<dbReference type="SMART" id="SM00363">
    <property type="entry name" value="S4"/>
    <property type="match status" value="1"/>
</dbReference>
<dbReference type="SUPFAM" id="SSF55174">
    <property type="entry name" value="Alpha-L RNA-binding motif"/>
    <property type="match status" value="1"/>
</dbReference>
<dbReference type="PROSITE" id="PS00632">
    <property type="entry name" value="RIBOSOMAL_S4"/>
    <property type="match status" value="1"/>
</dbReference>
<dbReference type="PROSITE" id="PS50889">
    <property type="entry name" value="S4"/>
    <property type="match status" value="1"/>
</dbReference>
<accession>Q6H9L2</accession>
<sequence>MSRYRGPRLRIIRRLQNLPGLTNKLVESKKNKVSGSDQSIQKKVSQYGIRLEAKQRLRFNYGLTERQLLNYVRIARCAKGSTGQILLQLLEMRLDNILFRLGFVPTIPSARQLINHRHILVNNRIVDVPSFHCKPKDIITIGAPKTYQSILSKRIESFAKDQIPEHLTLSLSEPKKPKGFVNYLINRESIGLKINELLVVEYYSRKA</sequence>
<gene>
    <name type="primary">rps4</name>
</gene>